<feature type="chain" id="PRO_0000248431" description="Uncharacterized protein YBL113C">
    <location>
        <begin position="1"/>
        <end position="792"/>
    </location>
</feature>
<feature type="repeat" description="1">
    <location>
        <begin position="91"/>
        <end position="102"/>
    </location>
</feature>
<feature type="repeat" description="2">
    <location>
        <begin position="103"/>
        <end position="114"/>
    </location>
</feature>
<feature type="repeat" description="3">
    <location>
        <begin position="115"/>
        <end position="126"/>
    </location>
</feature>
<feature type="repeat" description="4">
    <location>
        <begin position="127"/>
        <end position="138"/>
    </location>
</feature>
<feature type="repeat" description="5">
    <location>
        <begin position="139"/>
        <end position="150"/>
    </location>
</feature>
<feature type="repeat" description="6">
    <location>
        <begin position="151"/>
        <end position="162"/>
    </location>
</feature>
<feature type="repeat" description="7">
    <location>
        <begin position="163"/>
        <end position="174"/>
    </location>
</feature>
<feature type="repeat" description="8">
    <location>
        <begin position="175"/>
        <end position="186"/>
    </location>
</feature>
<feature type="repeat" description="9">
    <location>
        <begin position="187"/>
        <end position="198"/>
    </location>
</feature>
<feature type="repeat" description="10">
    <location>
        <begin position="199"/>
        <end position="210"/>
    </location>
</feature>
<feature type="repeat" description="11">
    <location>
        <begin position="211"/>
        <end position="222"/>
    </location>
</feature>
<feature type="repeat" description="12">
    <location>
        <begin position="223"/>
        <end position="234"/>
    </location>
</feature>
<feature type="repeat" description="13">
    <location>
        <begin position="235"/>
        <end position="246"/>
    </location>
</feature>
<feature type="repeat" description="14">
    <location>
        <begin position="247"/>
        <end position="258"/>
    </location>
</feature>
<feature type="repeat" description="15">
    <location>
        <begin position="259"/>
        <end position="270"/>
    </location>
</feature>
<feature type="repeat" description="16">
    <location>
        <begin position="271"/>
        <end position="282"/>
    </location>
</feature>
<feature type="repeat" description="17">
    <location>
        <begin position="283"/>
        <end position="294"/>
    </location>
</feature>
<feature type="repeat" description="18">
    <location>
        <begin position="295"/>
        <end position="306"/>
    </location>
</feature>
<feature type="repeat" description="19">
    <location>
        <begin position="307"/>
        <end position="318"/>
    </location>
</feature>
<feature type="repeat" description="20">
    <location>
        <begin position="319"/>
        <end position="330"/>
    </location>
</feature>
<feature type="repeat" description="21">
    <location>
        <begin position="331"/>
        <end position="342"/>
    </location>
</feature>
<feature type="repeat" description="22">
    <location>
        <begin position="343"/>
        <end position="354"/>
    </location>
</feature>
<feature type="repeat" description="23">
    <location>
        <begin position="355"/>
        <end position="366"/>
    </location>
</feature>
<feature type="repeat" description="24">
    <location>
        <begin position="367"/>
        <end position="378"/>
    </location>
</feature>
<feature type="repeat" description="25">
    <location>
        <begin position="379"/>
        <end position="390"/>
    </location>
</feature>
<feature type="region of interest" description="25 X 12 AA tandem repeat of N-[SV]-[RS]-T-[NS]-A-T-T-T-[AE]-[ST]-[IT]">
    <location>
        <begin position="91"/>
        <end position="390"/>
    </location>
</feature>
<feature type="region of interest" description="Disordered" evidence="1">
    <location>
        <begin position="113"/>
        <end position="417"/>
    </location>
</feature>
<feature type="compositionally biased region" description="Low complexity" evidence="1">
    <location>
        <begin position="118"/>
        <end position="393"/>
    </location>
</feature>
<feature type="compositionally biased region" description="Basic and acidic residues" evidence="1">
    <location>
        <begin position="394"/>
        <end position="417"/>
    </location>
</feature>
<gene>
    <name type="ordered locus">YBL113C</name>
</gene>
<keyword id="KW-1185">Reference proteome</keyword>
<keyword id="KW-0677">Repeat</keyword>
<proteinExistence type="predicted"/>
<sequence length="792" mass="86976">MDLNQRKEKKGQHVGCCGSRTDLSADTVELIERMDRLAENQATASMSIVALPSSFQESNSSDRCRKYCSSDEDSDTCIHGSANASTNATTNSSTNATTTASINVRTSATTTASINVRTSATTTESTNSNTNATTTESTNSSTNATTTASINVRTSATTTESTNSSTNATTTASINVRTSATTTESTNSSTNATTTASINVRTSATTTESTNSNTNASTNATTNSSTNATTTASTNVRTSATTNATTNSSTNATTTASTNVRTSATTTASTNVRTSATTTASINVRTSATTTESINSSTNATTTESTNSNTSATTTESTDSNTNATTTASINVRTSATTTESTNSNTSATTTESTDSNTSATTTASTNSSTNATTTASTNSSTNATTTESTNASAKEDANKDGNAEDNRFHPVTDINKESYKRKGSQMVFLERKKLKAQFPNTSENMNVLQFLGFRSDEIKHLFLYGIDIYFCPEGVFTQYGLCKGCQKMFGLCVCWAGQKVSYRRIAWEALAVERMLRNDEEYKEYLEDIEPYHGDPVGYLKYFSVKRREIYSQIQRNYAWYLAITRRRETISVLDSTRGKQGSQVFRMSGRQIKELYYKVWSNLRESKTEVLQYFLNWDEKKCREEWEAKDDTVFVEALEKVGVFQRLRSMTSAGLQGPQYVKLQFSRHHRQLRSRYELSLGMHLRDQLALGVTPSKVPHWTAFLSMLIGLFYNKTFRQKLEYLLEQISEMWLLPHWLDLANVEVLAADNTRVPLYMLMVAVHKELDSDDVPDGRFDIILLCRDSSREVGE</sequence>
<evidence type="ECO:0000256" key="1">
    <source>
        <dbReference type="SAM" id="MobiDB-lite"/>
    </source>
</evidence>
<protein>
    <recommendedName>
        <fullName>Uncharacterized protein YBL113C</fullName>
    </recommendedName>
</protein>
<organism>
    <name type="scientific">Saccharomyces cerevisiae (strain ATCC 204508 / S288c)</name>
    <name type="common">Baker's yeast</name>
    <dbReference type="NCBI Taxonomy" id="559292"/>
    <lineage>
        <taxon>Eukaryota</taxon>
        <taxon>Fungi</taxon>
        <taxon>Dikarya</taxon>
        <taxon>Ascomycota</taxon>
        <taxon>Saccharomycotina</taxon>
        <taxon>Saccharomycetes</taxon>
        <taxon>Saccharomycetales</taxon>
        <taxon>Saccharomycetaceae</taxon>
        <taxon>Saccharomyces</taxon>
    </lineage>
</organism>
<reference key="1">
    <citation type="journal article" date="1994" name="EMBO J.">
        <title>Complete DNA sequence of yeast chromosome II.</title>
        <authorList>
            <person name="Feldmann H."/>
            <person name="Aigle M."/>
            <person name="Aljinovic G."/>
            <person name="Andre B."/>
            <person name="Baclet M.C."/>
            <person name="Barthe C."/>
            <person name="Baur A."/>
            <person name="Becam A.-M."/>
            <person name="Biteau N."/>
            <person name="Boles E."/>
            <person name="Brandt T."/>
            <person name="Brendel M."/>
            <person name="Brueckner M."/>
            <person name="Bussereau F."/>
            <person name="Christiansen C."/>
            <person name="Contreras R."/>
            <person name="Crouzet M."/>
            <person name="Cziepluch C."/>
            <person name="Demolis N."/>
            <person name="Delaveau T."/>
            <person name="Doignon F."/>
            <person name="Domdey H."/>
            <person name="Duesterhus S."/>
            <person name="Dubois E."/>
            <person name="Dujon B."/>
            <person name="El Bakkoury M."/>
            <person name="Entian K.-D."/>
            <person name="Feuermann M."/>
            <person name="Fiers W."/>
            <person name="Fobo G.M."/>
            <person name="Fritz C."/>
            <person name="Gassenhuber J."/>
            <person name="Glansdorff N."/>
            <person name="Goffeau A."/>
            <person name="Grivell L.A."/>
            <person name="de Haan M."/>
            <person name="Hein C."/>
            <person name="Herbert C.J."/>
            <person name="Hollenberg C.P."/>
            <person name="Holmstroem K."/>
            <person name="Jacq C."/>
            <person name="Jacquet M."/>
            <person name="Jauniaux J.-C."/>
            <person name="Jonniaux J.-L."/>
            <person name="Kallesoee T."/>
            <person name="Kiesau P."/>
            <person name="Kirchrath L."/>
            <person name="Koetter P."/>
            <person name="Korol S."/>
            <person name="Liebl S."/>
            <person name="Logghe M."/>
            <person name="Lohan A.J.E."/>
            <person name="Louis E.J."/>
            <person name="Li Z.Y."/>
            <person name="Maat M.J."/>
            <person name="Mallet L."/>
            <person name="Mannhaupt G."/>
            <person name="Messenguy F."/>
            <person name="Miosga T."/>
            <person name="Molemans F."/>
            <person name="Mueller S."/>
            <person name="Nasr F."/>
            <person name="Obermaier B."/>
            <person name="Perea J."/>
            <person name="Pierard A."/>
            <person name="Piravandi E."/>
            <person name="Pohl F.M."/>
            <person name="Pohl T.M."/>
            <person name="Potier S."/>
            <person name="Proft M."/>
            <person name="Purnelle B."/>
            <person name="Ramezani Rad M."/>
            <person name="Rieger M."/>
            <person name="Rose M."/>
            <person name="Schaaff-Gerstenschlaeger I."/>
            <person name="Scherens B."/>
            <person name="Schwarzlose C."/>
            <person name="Skala J."/>
            <person name="Slonimski P.P."/>
            <person name="Smits P.H.M."/>
            <person name="Souciet J.-L."/>
            <person name="Steensma H.Y."/>
            <person name="Stucka R."/>
            <person name="Urrestarazu L.A."/>
            <person name="van der Aart Q.J.M."/>
            <person name="Van Dyck L."/>
            <person name="Vassarotti A."/>
            <person name="Vetter I."/>
            <person name="Vierendeels F."/>
            <person name="Vissers S."/>
            <person name="Wagner G."/>
            <person name="de Wergifosse P."/>
            <person name="Wolfe K.H."/>
            <person name="Zagulski M."/>
            <person name="Zimmermann F.K."/>
            <person name="Mewes H.-W."/>
            <person name="Kleine K."/>
        </authorList>
    </citation>
    <scope>NUCLEOTIDE SEQUENCE [LARGE SCALE GENOMIC DNA]</scope>
    <source>
        <strain>ATCC 204508 / S288c</strain>
    </source>
</reference>
<reference key="2">
    <citation type="journal article" date="2014" name="G3 (Bethesda)">
        <title>The reference genome sequence of Saccharomyces cerevisiae: Then and now.</title>
        <authorList>
            <person name="Engel S.R."/>
            <person name="Dietrich F.S."/>
            <person name="Fisk D.G."/>
            <person name="Binkley G."/>
            <person name="Balakrishnan R."/>
            <person name="Costanzo M.C."/>
            <person name="Dwight S.S."/>
            <person name="Hitz B.C."/>
            <person name="Karra K."/>
            <person name="Nash R.S."/>
            <person name="Weng S."/>
            <person name="Wong E.D."/>
            <person name="Lloyd P."/>
            <person name="Skrzypek M.S."/>
            <person name="Miyasato S.R."/>
            <person name="Simison M."/>
            <person name="Cherry J.M."/>
        </authorList>
    </citation>
    <scope>GENOME REANNOTATION</scope>
    <source>
        <strain>ATCC 204508 / S288c</strain>
    </source>
</reference>
<name>YB113_YEAST</name>
<dbReference type="EMBL" id="Y08934">
    <property type="status" value="NOT_ANNOTATED_CDS"/>
    <property type="molecule type" value="Genomic_DNA"/>
</dbReference>
<dbReference type="EMBL" id="BK006936">
    <property type="protein sequence ID" value="DAA07012.1"/>
    <property type="molecule type" value="Genomic_DNA"/>
</dbReference>
<dbReference type="PIR" id="S70305">
    <property type="entry name" value="S70305"/>
</dbReference>
<dbReference type="RefSeq" id="NP_009437.1">
    <property type="nucleotide sequence ID" value="NM_001180054.1"/>
</dbReference>
<dbReference type="BioGRID" id="32591">
    <property type="interactions" value="13"/>
</dbReference>
<dbReference type="DIP" id="DIP-28156N"/>
<dbReference type="FunCoup" id="Q7M4S9">
    <property type="interactions" value="40"/>
</dbReference>
<dbReference type="IntAct" id="Q7M4S9">
    <property type="interactions" value="1"/>
</dbReference>
<dbReference type="STRING" id="4932.YBL113C"/>
<dbReference type="iPTMnet" id="Q7M4S9"/>
<dbReference type="PaxDb" id="4932-YBL113C"/>
<dbReference type="PeptideAtlas" id="Q7M4S9"/>
<dbReference type="EnsemblFungi" id="YBL113C_mRNA">
    <property type="protein sequence ID" value="YBL113C"/>
    <property type="gene ID" value="YBL113C"/>
</dbReference>
<dbReference type="GeneID" id="852159"/>
<dbReference type="KEGG" id="sce:YBL113C"/>
<dbReference type="AGR" id="SGD:S000002153"/>
<dbReference type="SGD" id="S000002153">
    <property type="gene designation" value="YBL113C"/>
</dbReference>
<dbReference type="VEuPathDB" id="FungiDB:YBL113C"/>
<dbReference type="eggNOG" id="ENOG502QWCT">
    <property type="taxonomic scope" value="Eukaryota"/>
</dbReference>
<dbReference type="GeneTree" id="ENSGT00940000153173"/>
<dbReference type="HOGENOM" id="CLU_011178_4_1_1"/>
<dbReference type="InParanoid" id="Q7M4S9"/>
<dbReference type="OrthoDB" id="4060407at2759"/>
<dbReference type="BioCyc" id="YEAST:G3O-29225-MONOMER"/>
<dbReference type="BioGRID-ORCS" id="852159">
    <property type="hits" value="0 hits in 10 CRISPR screens"/>
</dbReference>
<dbReference type="CD-CODE" id="E03F929F">
    <property type="entry name" value="Stress granule"/>
</dbReference>
<dbReference type="PRO" id="PR:Q7M4S9"/>
<dbReference type="Proteomes" id="UP000002311">
    <property type="component" value="Chromosome II"/>
</dbReference>
<dbReference type="RNAct" id="Q7M4S9">
    <property type="molecule type" value="protein"/>
</dbReference>
<dbReference type="GO" id="GO:0005737">
    <property type="term" value="C:cytoplasm"/>
    <property type="evidence" value="ECO:0000318"/>
    <property type="project" value="GO_Central"/>
</dbReference>
<dbReference type="InterPro" id="IPR051363">
    <property type="entry name" value="RLR_Helicase"/>
</dbReference>
<dbReference type="PANTHER" id="PTHR14074:SF39">
    <property type="entry name" value="FANCONI ANEMIA GROUP M PROTEIN"/>
    <property type="match status" value="1"/>
</dbReference>
<dbReference type="PANTHER" id="PTHR14074">
    <property type="entry name" value="HELICASE WITH DEATH DOMAIN-RELATED"/>
    <property type="match status" value="1"/>
</dbReference>
<accession>Q7M4S9</accession>
<accession>D6VPP2</accession>